<comment type="catalytic activity">
    <reaction evidence="1">
        <text>tRNA(Lys) + L-lysine + ATP = L-lysyl-tRNA(Lys) + AMP + diphosphate</text>
        <dbReference type="Rhea" id="RHEA:20792"/>
        <dbReference type="Rhea" id="RHEA-COMP:9696"/>
        <dbReference type="Rhea" id="RHEA-COMP:9697"/>
        <dbReference type="ChEBI" id="CHEBI:30616"/>
        <dbReference type="ChEBI" id="CHEBI:32551"/>
        <dbReference type="ChEBI" id="CHEBI:33019"/>
        <dbReference type="ChEBI" id="CHEBI:78442"/>
        <dbReference type="ChEBI" id="CHEBI:78529"/>
        <dbReference type="ChEBI" id="CHEBI:456215"/>
        <dbReference type="EC" id="6.1.1.6"/>
    </reaction>
</comment>
<comment type="cofactor">
    <cofactor evidence="1">
        <name>Mg(2+)</name>
        <dbReference type="ChEBI" id="CHEBI:18420"/>
    </cofactor>
    <text evidence="1">Binds 3 Mg(2+) ions per subunit.</text>
</comment>
<comment type="subunit">
    <text evidence="1">Homodimer.</text>
</comment>
<comment type="subcellular location">
    <subcellularLocation>
        <location evidence="1">Cytoplasm</location>
    </subcellularLocation>
</comment>
<comment type="similarity">
    <text evidence="1">Belongs to the class-II aminoacyl-tRNA synthetase family.</text>
</comment>
<feature type="chain" id="PRO_1000101152" description="Lysine--tRNA ligase">
    <location>
        <begin position="1"/>
        <end position="496"/>
    </location>
</feature>
<feature type="binding site" evidence="1">
    <location>
        <position position="409"/>
    </location>
    <ligand>
        <name>Mg(2+)</name>
        <dbReference type="ChEBI" id="CHEBI:18420"/>
        <label>1</label>
    </ligand>
</feature>
<feature type="binding site" evidence="1">
    <location>
        <position position="416"/>
    </location>
    <ligand>
        <name>Mg(2+)</name>
        <dbReference type="ChEBI" id="CHEBI:18420"/>
        <label>1</label>
    </ligand>
</feature>
<feature type="binding site" evidence="1">
    <location>
        <position position="416"/>
    </location>
    <ligand>
        <name>Mg(2+)</name>
        <dbReference type="ChEBI" id="CHEBI:18420"/>
        <label>2</label>
    </ligand>
</feature>
<organism>
    <name type="scientific">Streptococcus pneumoniae (strain CGSP14)</name>
    <dbReference type="NCBI Taxonomy" id="516950"/>
    <lineage>
        <taxon>Bacteria</taxon>
        <taxon>Bacillati</taxon>
        <taxon>Bacillota</taxon>
        <taxon>Bacilli</taxon>
        <taxon>Lactobacillales</taxon>
        <taxon>Streptococcaceae</taxon>
        <taxon>Streptococcus</taxon>
    </lineage>
</organism>
<keyword id="KW-0030">Aminoacyl-tRNA synthetase</keyword>
<keyword id="KW-0067">ATP-binding</keyword>
<keyword id="KW-0963">Cytoplasm</keyword>
<keyword id="KW-0436">Ligase</keyword>
<keyword id="KW-0460">Magnesium</keyword>
<keyword id="KW-0479">Metal-binding</keyword>
<keyword id="KW-0547">Nucleotide-binding</keyword>
<keyword id="KW-0648">Protein biosynthesis</keyword>
<protein>
    <recommendedName>
        <fullName evidence="1">Lysine--tRNA ligase</fullName>
        <ecNumber evidence="1">6.1.1.6</ecNumber>
    </recommendedName>
    <alternativeName>
        <fullName evidence="1">Lysyl-tRNA synthetase</fullName>
        <shortName evidence="1">LysRS</shortName>
    </alternativeName>
</protein>
<evidence type="ECO:0000255" key="1">
    <source>
        <dbReference type="HAMAP-Rule" id="MF_00252"/>
    </source>
</evidence>
<accession>B2IN95</accession>
<name>SYK_STRPS</name>
<sequence>MSTEHMEELNDQQIVRREKMAALREQGIDPFGKRFERTANSQELKDKYANLDKEQLHDKNETATIAGRLVTKRGKGKVGFAHLQDREGQIQIYVRKDAVGEENYEIFKKADLGDFLGVEGEVMRTDMGELSIKATHITHLSKALRPLPEKFHGLTDVETIYRKRYLDLISNRESFERFVTRSKIISEIRRYLDQKGFLEVETPVLHNEAGGAAARPFITHHNAQNIDMVLRIATELHLKRLIVGGMERVYEIGRIFRNEGMDATHNPEFTSIEVYQAYADFQDIMDLTEGIIQHAAKSVKGDGPVNYQGTEIKINKPFKRVHMVDAIKEITGVDFWQDMTLEEAKAIAAEKKVPVEKHYTEVGHIINAFFEEFVEETLIQPTFVYGHPVAVSPLAKKNPEDQRFTDRFELFIMTKEYGNAFTELNDPIDQLSRFEAQAKAKELGDDEATGIDYDYIEALEYGMPPTGGLGIGIDRLCMLLTDTTTIRDVLLFPTMK</sequence>
<proteinExistence type="inferred from homology"/>
<gene>
    <name evidence="1" type="primary">lysS</name>
    <name type="ordered locus">SPCG_0662</name>
</gene>
<dbReference type="EC" id="6.1.1.6" evidence="1"/>
<dbReference type="EMBL" id="CP001033">
    <property type="protein sequence ID" value="ACB89914.1"/>
    <property type="molecule type" value="Genomic_DNA"/>
</dbReference>
<dbReference type="RefSeq" id="WP_000102463.1">
    <property type="nucleotide sequence ID" value="NC_010582.1"/>
</dbReference>
<dbReference type="SMR" id="B2IN95"/>
<dbReference type="KEGG" id="spw:SPCG_0662"/>
<dbReference type="HOGENOM" id="CLU_008255_6_0_9"/>
<dbReference type="GO" id="GO:0005829">
    <property type="term" value="C:cytosol"/>
    <property type="evidence" value="ECO:0007669"/>
    <property type="project" value="TreeGrafter"/>
</dbReference>
<dbReference type="GO" id="GO:0005524">
    <property type="term" value="F:ATP binding"/>
    <property type="evidence" value="ECO:0007669"/>
    <property type="project" value="UniProtKB-UniRule"/>
</dbReference>
<dbReference type="GO" id="GO:0140096">
    <property type="term" value="F:catalytic activity, acting on a protein"/>
    <property type="evidence" value="ECO:0007669"/>
    <property type="project" value="UniProtKB-ARBA"/>
</dbReference>
<dbReference type="GO" id="GO:0004824">
    <property type="term" value="F:lysine-tRNA ligase activity"/>
    <property type="evidence" value="ECO:0007669"/>
    <property type="project" value="UniProtKB-UniRule"/>
</dbReference>
<dbReference type="GO" id="GO:0000287">
    <property type="term" value="F:magnesium ion binding"/>
    <property type="evidence" value="ECO:0007669"/>
    <property type="project" value="UniProtKB-UniRule"/>
</dbReference>
<dbReference type="GO" id="GO:0016740">
    <property type="term" value="F:transferase activity"/>
    <property type="evidence" value="ECO:0007669"/>
    <property type="project" value="UniProtKB-ARBA"/>
</dbReference>
<dbReference type="GO" id="GO:0000049">
    <property type="term" value="F:tRNA binding"/>
    <property type="evidence" value="ECO:0007669"/>
    <property type="project" value="TreeGrafter"/>
</dbReference>
<dbReference type="GO" id="GO:0006430">
    <property type="term" value="P:lysyl-tRNA aminoacylation"/>
    <property type="evidence" value="ECO:0007669"/>
    <property type="project" value="UniProtKB-UniRule"/>
</dbReference>
<dbReference type="CDD" id="cd00775">
    <property type="entry name" value="LysRS_core"/>
    <property type="match status" value="1"/>
</dbReference>
<dbReference type="CDD" id="cd04322">
    <property type="entry name" value="LysRS_N"/>
    <property type="match status" value="1"/>
</dbReference>
<dbReference type="FunFam" id="2.40.50.140:FF:000024">
    <property type="entry name" value="Lysine--tRNA ligase"/>
    <property type="match status" value="1"/>
</dbReference>
<dbReference type="FunFam" id="3.30.930.10:FF:000001">
    <property type="entry name" value="Lysine--tRNA ligase"/>
    <property type="match status" value="1"/>
</dbReference>
<dbReference type="Gene3D" id="3.30.930.10">
    <property type="entry name" value="Bira Bifunctional Protein, Domain 2"/>
    <property type="match status" value="1"/>
</dbReference>
<dbReference type="Gene3D" id="2.40.50.140">
    <property type="entry name" value="Nucleic acid-binding proteins"/>
    <property type="match status" value="1"/>
</dbReference>
<dbReference type="HAMAP" id="MF_00252">
    <property type="entry name" value="Lys_tRNA_synth_class2"/>
    <property type="match status" value="1"/>
</dbReference>
<dbReference type="InterPro" id="IPR004364">
    <property type="entry name" value="Aa-tRNA-synt_II"/>
</dbReference>
<dbReference type="InterPro" id="IPR006195">
    <property type="entry name" value="aa-tRNA-synth_II"/>
</dbReference>
<dbReference type="InterPro" id="IPR045864">
    <property type="entry name" value="aa-tRNA-synth_II/BPL/LPL"/>
</dbReference>
<dbReference type="InterPro" id="IPR002313">
    <property type="entry name" value="Lys-tRNA-ligase_II"/>
</dbReference>
<dbReference type="InterPro" id="IPR034762">
    <property type="entry name" value="Lys-tRNA-ligase_II_bac/euk"/>
</dbReference>
<dbReference type="InterPro" id="IPR044136">
    <property type="entry name" value="Lys-tRNA-ligase_II_N"/>
</dbReference>
<dbReference type="InterPro" id="IPR018149">
    <property type="entry name" value="Lys-tRNA-synth_II_C"/>
</dbReference>
<dbReference type="InterPro" id="IPR012340">
    <property type="entry name" value="NA-bd_OB-fold"/>
</dbReference>
<dbReference type="InterPro" id="IPR004365">
    <property type="entry name" value="NA-bd_OB_tRNA"/>
</dbReference>
<dbReference type="NCBIfam" id="TIGR00499">
    <property type="entry name" value="lysS_bact"/>
    <property type="match status" value="1"/>
</dbReference>
<dbReference type="NCBIfam" id="NF001756">
    <property type="entry name" value="PRK00484.1"/>
    <property type="match status" value="1"/>
</dbReference>
<dbReference type="PANTHER" id="PTHR42918:SF15">
    <property type="entry name" value="LYSINE--TRNA LIGASE, CHLOROPLASTIC_MITOCHONDRIAL"/>
    <property type="match status" value="1"/>
</dbReference>
<dbReference type="PANTHER" id="PTHR42918">
    <property type="entry name" value="LYSYL-TRNA SYNTHETASE"/>
    <property type="match status" value="1"/>
</dbReference>
<dbReference type="Pfam" id="PF00152">
    <property type="entry name" value="tRNA-synt_2"/>
    <property type="match status" value="1"/>
</dbReference>
<dbReference type="Pfam" id="PF01336">
    <property type="entry name" value="tRNA_anti-codon"/>
    <property type="match status" value="1"/>
</dbReference>
<dbReference type="PIRSF" id="PIRSF039101">
    <property type="entry name" value="LysRS2"/>
    <property type="match status" value="1"/>
</dbReference>
<dbReference type="PRINTS" id="PR00982">
    <property type="entry name" value="TRNASYNTHLYS"/>
</dbReference>
<dbReference type="SUPFAM" id="SSF55681">
    <property type="entry name" value="Class II aaRS and biotin synthetases"/>
    <property type="match status" value="1"/>
</dbReference>
<dbReference type="SUPFAM" id="SSF50249">
    <property type="entry name" value="Nucleic acid-binding proteins"/>
    <property type="match status" value="1"/>
</dbReference>
<dbReference type="PROSITE" id="PS50862">
    <property type="entry name" value="AA_TRNA_LIGASE_II"/>
    <property type="match status" value="1"/>
</dbReference>
<reference key="1">
    <citation type="journal article" date="2009" name="BMC Genomics">
        <title>Genome evolution driven by host adaptations results in a more virulent and antimicrobial-resistant Streptococcus pneumoniae serotype 14.</title>
        <authorList>
            <person name="Ding F."/>
            <person name="Tang P."/>
            <person name="Hsu M.-H."/>
            <person name="Cui P."/>
            <person name="Hu S."/>
            <person name="Yu J."/>
            <person name="Chiu C.-H."/>
        </authorList>
    </citation>
    <scope>NUCLEOTIDE SEQUENCE [LARGE SCALE GENOMIC DNA]</scope>
    <source>
        <strain>CGSP14</strain>
    </source>
</reference>